<dbReference type="EMBL" id="CP000802">
    <property type="protein sequence ID" value="ABV05542.1"/>
    <property type="molecule type" value="Genomic_DNA"/>
</dbReference>
<dbReference type="RefSeq" id="WP_000589315.1">
    <property type="nucleotide sequence ID" value="NC_009800.1"/>
</dbReference>
<dbReference type="SMR" id="A7ZZ38"/>
<dbReference type="KEGG" id="ecx:EcHS_A1203"/>
<dbReference type="HOGENOM" id="CLU_045235_1_0_6"/>
<dbReference type="GO" id="GO:0009428">
    <property type="term" value="C:bacterial-type flagellum basal body, distal rod, P ring"/>
    <property type="evidence" value="ECO:0007669"/>
    <property type="project" value="InterPro"/>
</dbReference>
<dbReference type="GO" id="GO:0030288">
    <property type="term" value="C:outer membrane-bounded periplasmic space"/>
    <property type="evidence" value="ECO:0007669"/>
    <property type="project" value="InterPro"/>
</dbReference>
<dbReference type="GO" id="GO:0005198">
    <property type="term" value="F:structural molecule activity"/>
    <property type="evidence" value="ECO:0007669"/>
    <property type="project" value="InterPro"/>
</dbReference>
<dbReference type="GO" id="GO:0071973">
    <property type="term" value="P:bacterial-type flagellum-dependent cell motility"/>
    <property type="evidence" value="ECO:0007669"/>
    <property type="project" value="InterPro"/>
</dbReference>
<dbReference type="HAMAP" id="MF_00416">
    <property type="entry name" value="FlgI"/>
    <property type="match status" value="1"/>
</dbReference>
<dbReference type="InterPro" id="IPR001782">
    <property type="entry name" value="Flag_FlgI"/>
</dbReference>
<dbReference type="NCBIfam" id="NF003676">
    <property type="entry name" value="PRK05303.1"/>
    <property type="match status" value="1"/>
</dbReference>
<dbReference type="PANTHER" id="PTHR30381">
    <property type="entry name" value="FLAGELLAR P-RING PERIPLASMIC PROTEIN FLGI"/>
    <property type="match status" value="1"/>
</dbReference>
<dbReference type="PANTHER" id="PTHR30381:SF0">
    <property type="entry name" value="FLAGELLAR P-RING PROTEIN"/>
    <property type="match status" value="1"/>
</dbReference>
<dbReference type="Pfam" id="PF02119">
    <property type="entry name" value="FlgI"/>
    <property type="match status" value="1"/>
</dbReference>
<dbReference type="PRINTS" id="PR01010">
    <property type="entry name" value="FLGPRINGFLGI"/>
</dbReference>
<keyword id="KW-0975">Bacterial flagellum</keyword>
<keyword id="KW-0574">Periplasm</keyword>
<keyword id="KW-0732">Signal</keyword>
<evidence type="ECO:0000255" key="1">
    <source>
        <dbReference type="HAMAP-Rule" id="MF_00416"/>
    </source>
</evidence>
<feature type="signal peptide" evidence="1">
    <location>
        <begin position="1"/>
        <end position="19"/>
    </location>
</feature>
<feature type="chain" id="PRO_1000060076" description="Flagellar P-ring protein">
    <location>
        <begin position="20"/>
        <end position="365"/>
    </location>
</feature>
<proteinExistence type="inferred from homology"/>
<protein>
    <recommendedName>
        <fullName evidence="1">Flagellar P-ring protein</fullName>
    </recommendedName>
    <alternativeName>
        <fullName evidence="1">Basal body P-ring protein</fullName>
    </alternativeName>
</protein>
<accession>A7ZZ38</accession>
<sequence length="365" mass="38178">MIKFLSALILLLVTTAAQAERIRDLTSVQGVRQNSLIGYGLVVGLDGTGDQTTQTPFTTQTLNNMLSQLGITVPTGTNMQLKNVAAVMVTASLPPFGRQGQTIDVVVSSMGNAKSLRGGTLLMTPLKGVDSQVYALAQGNILVGGAGASAGGSSVQVNQLNGGRITNGAVIERELPSQFGVGNTLNLQLNDEDFSMAQQIADTINRVRGYGSATALDARTIQVRVPSGNSSQVRFLADIQNMHVNVTPQDAKVVINSRTGSVVMNREVTLDSCAVAQGNLSVTVNRQANVSQPDTPFGGGQTVVTPQTQIDLRQSGGSLQSVRSSASLNNVVRALNALGATPMDLMSILQSMQSAGCLRAKLEII</sequence>
<comment type="function">
    <text evidence="1">Assembles around the rod to form the L-ring and probably protects the motor/basal body from shearing forces during rotation.</text>
</comment>
<comment type="subunit">
    <text evidence="1">The basal body constitutes a major portion of the flagellar organelle and consists of four rings (L,P,S, and M) mounted on a central rod.</text>
</comment>
<comment type="subcellular location">
    <subcellularLocation>
        <location evidence="1">Periplasm</location>
    </subcellularLocation>
    <subcellularLocation>
        <location evidence="1">Bacterial flagellum basal body</location>
    </subcellularLocation>
</comment>
<comment type="similarity">
    <text evidence="1">Belongs to the FlgI family.</text>
</comment>
<gene>
    <name evidence="1" type="primary">flgI</name>
    <name type="ordered locus">EcHS_A1203</name>
</gene>
<organism>
    <name type="scientific">Escherichia coli O9:H4 (strain HS)</name>
    <dbReference type="NCBI Taxonomy" id="331112"/>
    <lineage>
        <taxon>Bacteria</taxon>
        <taxon>Pseudomonadati</taxon>
        <taxon>Pseudomonadota</taxon>
        <taxon>Gammaproteobacteria</taxon>
        <taxon>Enterobacterales</taxon>
        <taxon>Enterobacteriaceae</taxon>
        <taxon>Escherichia</taxon>
    </lineage>
</organism>
<reference key="1">
    <citation type="journal article" date="2008" name="J. Bacteriol.">
        <title>The pangenome structure of Escherichia coli: comparative genomic analysis of E. coli commensal and pathogenic isolates.</title>
        <authorList>
            <person name="Rasko D.A."/>
            <person name="Rosovitz M.J."/>
            <person name="Myers G.S.A."/>
            <person name="Mongodin E.F."/>
            <person name="Fricke W.F."/>
            <person name="Gajer P."/>
            <person name="Crabtree J."/>
            <person name="Sebaihia M."/>
            <person name="Thomson N.R."/>
            <person name="Chaudhuri R."/>
            <person name="Henderson I.R."/>
            <person name="Sperandio V."/>
            <person name="Ravel J."/>
        </authorList>
    </citation>
    <scope>NUCLEOTIDE SEQUENCE [LARGE SCALE GENOMIC DNA]</scope>
    <source>
        <strain>HS</strain>
    </source>
</reference>
<name>FLGI_ECOHS</name>